<gene>
    <name evidence="7" type="primary">DBPgamma</name>
</gene>
<keyword id="KW-1015">Disulfide bond</keyword>
<keyword id="KW-0325">Glycoprotein</keyword>
<keyword id="KW-0461">Malaria</keyword>
<keyword id="KW-0472">Membrane</keyword>
<keyword id="KW-0675">Receptor</keyword>
<keyword id="KW-0732">Signal</keyword>
<keyword id="KW-0812">Transmembrane</keyword>
<keyword id="KW-1133">Transmembrane helix</keyword>
<proteinExistence type="inferred from homology"/>
<accession>P50494</accession>
<protein>
    <recommendedName>
        <fullName>Duffy receptor gamma form</fullName>
    </recommendedName>
    <alternativeName>
        <fullName evidence="6">Erythrocyte-binding protein</fullName>
    </alternativeName>
</protein>
<organism>
    <name type="scientific">Plasmodium knowlesi</name>
    <dbReference type="NCBI Taxonomy" id="5850"/>
    <lineage>
        <taxon>Eukaryota</taxon>
        <taxon>Sar</taxon>
        <taxon>Alveolata</taxon>
        <taxon>Apicomplexa</taxon>
        <taxon>Aconoidasida</taxon>
        <taxon>Haemosporida</taxon>
        <taxon>Plasmodiidae</taxon>
        <taxon>Plasmodium</taxon>
        <taxon>Plasmodium (Plasmodium)</taxon>
    </lineage>
</organism>
<feature type="signal peptide" evidence="2">
    <location>
        <begin position="1"/>
        <end position="21"/>
    </location>
</feature>
<feature type="chain" id="PRO_0000024620" description="Duffy receptor gamma form">
    <location>
        <begin position="22"/>
        <end position="1070"/>
    </location>
</feature>
<feature type="topological domain" description="Extracellular" evidence="2">
    <location>
        <begin position="22"/>
        <end position="1003"/>
    </location>
</feature>
<feature type="transmembrane region" description="Helical" evidence="2">
    <location>
        <begin position="1004"/>
        <end position="1025"/>
    </location>
</feature>
<feature type="topological domain" description="Cytoplasmic" evidence="2">
    <location>
        <begin position="1026"/>
        <end position="1070"/>
    </location>
</feature>
<feature type="region of interest" description="Disordered" evidence="3">
    <location>
        <begin position="518"/>
        <end position="912"/>
    </location>
</feature>
<feature type="short sequence motif" description="Cell attachment site" evidence="2">
    <location>
        <begin position="279"/>
        <end position="281"/>
    </location>
</feature>
<feature type="compositionally biased region" description="Polar residues" evidence="3">
    <location>
        <begin position="526"/>
        <end position="541"/>
    </location>
</feature>
<feature type="compositionally biased region" description="Basic and acidic residues" evidence="3">
    <location>
        <begin position="544"/>
        <end position="559"/>
    </location>
</feature>
<feature type="compositionally biased region" description="Basic and acidic residues" evidence="3">
    <location>
        <begin position="672"/>
        <end position="707"/>
    </location>
</feature>
<feature type="compositionally biased region" description="Basic and acidic residues" evidence="3">
    <location>
        <begin position="714"/>
        <end position="731"/>
    </location>
</feature>
<feature type="compositionally biased region" description="Polar residues" evidence="3">
    <location>
        <begin position="732"/>
        <end position="763"/>
    </location>
</feature>
<feature type="compositionally biased region" description="Low complexity" evidence="3">
    <location>
        <begin position="766"/>
        <end position="776"/>
    </location>
</feature>
<feature type="compositionally biased region" description="Basic and acidic residues" evidence="3">
    <location>
        <begin position="796"/>
        <end position="807"/>
    </location>
</feature>
<feature type="compositionally biased region" description="Low complexity" evidence="3">
    <location>
        <begin position="814"/>
        <end position="863"/>
    </location>
</feature>
<feature type="compositionally biased region" description="Basic and acidic residues" evidence="3">
    <location>
        <begin position="864"/>
        <end position="888"/>
    </location>
</feature>
<feature type="compositionally biased region" description="Polar residues" evidence="3">
    <location>
        <begin position="890"/>
        <end position="906"/>
    </location>
</feature>
<feature type="glycosylation site" description="N-linked (GlcNAc...) asparagine" evidence="2">
    <location>
        <position position="134"/>
    </location>
</feature>
<feature type="glycosylation site" description="N-linked (GlcNAc...) asparagine" evidence="2">
    <location>
        <position position="179"/>
    </location>
</feature>
<feature type="glycosylation site" description="N-linked (GlcNAc...) asparagine" evidence="2">
    <location>
        <position position="676"/>
    </location>
</feature>
<feature type="glycosylation site" description="N-linked (GlcNAc...) asparagine" evidence="2">
    <location>
        <position position="743"/>
    </location>
</feature>
<feature type="glycosylation site" description="N-linked (GlcNAc...) asparagine" evidence="2">
    <location>
        <position position="785"/>
    </location>
</feature>
<feature type="glycosylation site" description="N-linked (GlcNAc...) asparagine" evidence="2">
    <location>
        <position position="936"/>
    </location>
</feature>
<feature type="disulfide bond" evidence="1">
    <location>
        <begin position="214"/>
        <end position="243"/>
    </location>
</feature>
<feature type="disulfide bond" evidence="1">
    <location>
        <begin position="227"/>
        <end position="234"/>
    </location>
</feature>
<feature type="disulfide bond" evidence="1">
    <location>
        <begin position="296"/>
        <end position="372"/>
    </location>
</feature>
<feature type="disulfide bond" evidence="1">
    <location>
        <begin position="410"/>
        <end position="427"/>
    </location>
</feature>
<feature type="disulfide bond" evidence="1">
    <location>
        <begin position="422"/>
        <end position="502"/>
    </location>
</feature>
<feature type="disulfide bond" evidence="1">
    <location>
        <begin position="431"/>
        <end position="500"/>
    </location>
</feature>
<sequence length="1070" mass="120931">MEGKKKRPLFFLLVLLLSHKANNVLFERMNGILLLECENEYVKNENGYKLATGHHYMDNDQIERWLQGTDRSRRVKIEENVKYKYNVEELNTKYEQMKGKRINRILKESTYEAQNVADNNYIDDKANGEYKTDNKTNKGEGARNMVMLDYDISGSGQPDGIIDNVVELLTEDEGNFLKNSSKGDDHPYRMKRKEKMSSGAINQIFLQNNVMDKCNDKRKRGERDWDCPTEKDVCIPDRRYQLCMMEITNLVDTDTHFHSDIIFRKSYSRRRLIYDVGGRGDLLLKKYNNVYSEDLCKDIKWSLQDFGDIIMGTDMEGIGYSLVVQNNLRSIFGTGTSAELDRKKWWNDHKKDIWKAMILSVKEKNRYSAWNCKEDVQIKVEPQIYRWIREWGRDYMSEFREQRRKLNEKCEDKLYYSTMLICTLPPCNNACKSYDEWITGKKKQWDVLSTKFSSVKKAQKIETENIARAYDILKQELNGFNEVTFENEINKRDKLYNYFCVCIVQEARKNTQENVKNVGSGVESKAPSSNPINEAVKSSSGEGKVQEDSAHRSVNEGEGKSSTNEADPGSQPGGPASRSVDEKAGVPALSAGQGHDKVPPAEAAATESAVPHSADKTPITATEENKQRTQVDGVAGGDGKAPGPTVSSDVPSVGGKDSGPSTPASHLAGENGEVHNGTDTEPKEDGEKADPQKNIEVKGKQDTDDRSQGSLGPHTDERASLGETHMEKDTETTGGSTLTPEQNVSVASDNGNVPGSGNKQNEGATALSGAESLESSESVHKTIDNTTHGLENKNGGNEKDFQKHDFMNNDMLNDQTSSDHTSSDQTSSDQTSSDQTSSDQTSSDQTSSDQTSSDQTSSDQTIDTEGHHRDNVRNPEIKSSEDMSKGDFMRNSNSNELYSHNNLNNRKLNRDQYEHRDVKATREKIILMSEVNKCNNRTSLKYCNTIEDRMLSSTCSRERSKNLCCSISDFCLNYFELYSYEFYNCMKKEFEDPSYECFTKGSSTGIVYFATGGAFLIILLLFASWNAASNDYEEEATFDEFEEYCYNIHRTPQMPNDIEHMQQFTPLDYS</sequence>
<evidence type="ECO:0000250" key="1">
    <source>
        <dbReference type="UniProtKB" id="P22545"/>
    </source>
</evidence>
<evidence type="ECO:0000255" key="2"/>
<evidence type="ECO:0000256" key="3">
    <source>
        <dbReference type="SAM" id="MobiDB-lite"/>
    </source>
</evidence>
<evidence type="ECO:0000269" key="4">
    <source>
    </source>
</evidence>
<evidence type="ECO:0000269" key="5">
    <source>
    </source>
</evidence>
<evidence type="ECO:0000303" key="6">
    <source>
    </source>
</evidence>
<evidence type="ECO:0000305" key="7"/>
<dbReference type="EMBL" id="M90695">
    <property type="protein sequence ID" value="AAA29604.1"/>
    <property type="molecule type" value="Genomic_DNA"/>
</dbReference>
<dbReference type="SMR" id="P50494"/>
<dbReference type="VEuPathDB" id="PlasmoDB:PKA1H_130061400"/>
<dbReference type="VEuPathDB" id="PlasmoDB:PKNH_1356900"/>
<dbReference type="VEuPathDB" id="PlasmoDB:PKNOH_S05400700"/>
<dbReference type="eggNOG" id="ENOG502SZ6Z">
    <property type="taxonomic scope" value="Eukaryota"/>
</dbReference>
<dbReference type="GO" id="GO:0016020">
    <property type="term" value="C:membrane"/>
    <property type="evidence" value="ECO:0007669"/>
    <property type="project" value="UniProtKB-SubCell"/>
</dbReference>
<dbReference type="GO" id="GO:0046789">
    <property type="term" value="F:host cell surface receptor binding"/>
    <property type="evidence" value="ECO:0007669"/>
    <property type="project" value="InterPro"/>
</dbReference>
<dbReference type="FunFam" id="1.10.1740.170:FF:000001">
    <property type="entry name" value="Erythrocyte binding antigen"/>
    <property type="match status" value="1"/>
</dbReference>
<dbReference type="Gene3D" id="1.20.58.830">
    <property type="match status" value="1"/>
</dbReference>
<dbReference type="Gene3D" id="1.20.1310.20">
    <property type="entry name" value="Duffy-antigen binding domain"/>
    <property type="match status" value="1"/>
</dbReference>
<dbReference type="Gene3D" id="1.10.1740.170">
    <property type="entry name" value="Erythrocyte binding antigen 175 region VI"/>
    <property type="match status" value="1"/>
</dbReference>
<dbReference type="InterPro" id="IPR042202">
    <property type="entry name" value="Duffy-ag-bd_sf"/>
</dbReference>
<dbReference type="InterPro" id="IPR008602">
    <property type="entry name" value="Duffy-antigen-binding"/>
</dbReference>
<dbReference type="InterPro" id="IPR021015">
    <property type="entry name" value="Duffy-antigen-binding_C"/>
</dbReference>
<dbReference type="InterPro" id="IPR021032">
    <property type="entry name" value="Duffy-antigen-binding_N"/>
</dbReference>
<dbReference type="InterPro" id="IPR021620">
    <property type="entry name" value="EBA-175_C"/>
</dbReference>
<dbReference type="InterPro" id="IPR043057">
    <property type="entry name" value="EBA-175_C_sf"/>
</dbReference>
<dbReference type="Pfam" id="PF12361">
    <property type="entry name" value="DBP"/>
    <property type="match status" value="1"/>
</dbReference>
<dbReference type="Pfam" id="PF05424">
    <property type="entry name" value="Duffy_binding"/>
    <property type="match status" value="1"/>
</dbReference>
<dbReference type="Pfam" id="PF12377">
    <property type="entry name" value="DuffyBP_N"/>
    <property type="match status" value="1"/>
</dbReference>
<dbReference type="Pfam" id="PF11556">
    <property type="entry name" value="EBA-175_VI"/>
    <property type="match status" value="1"/>
</dbReference>
<dbReference type="SUPFAM" id="SSF140924">
    <property type="entry name" value="Duffy binding domain-like"/>
    <property type="match status" value="1"/>
</dbReference>
<comment type="function">
    <text evidence="4 5">Binds to Neu5Gc-sialylated receptors on macaque erythrocytes.</text>
</comment>
<comment type="subcellular location">
    <subcellularLocation>
        <location evidence="2">Membrane</location>
        <topology evidence="2">Single-pass type I membrane protein</topology>
    </subcellularLocation>
</comment>
<reference key="1">
    <citation type="journal article" date="1992" name="Proc. Natl. Acad. Sci. U.S.A.">
        <title>A family of erythrocyte binding proteins of malaria parasites.</title>
        <authorList>
            <person name="Adams J.H."/>
            <person name="Sim B.K."/>
            <person name="Dolan S.A."/>
            <person name="Fang X."/>
            <person name="Kaslow D.C."/>
            <person name="Miller L.H."/>
        </authorList>
    </citation>
    <scope>NUCLEOTIDE SEQUENCE [GENOMIC DNA]</scope>
</reference>
<reference key="2">
    <citation type="journal article" date="1999" name="Proc. Natl. Acad. Sci. U.S.A.">
        <title>Mapping regions containing binding residues within functional domains of Plasmodium vivax and Plasmodium knowlesi erythrocyte-binding proteins.</title>
        <authorList>
            <person name="Ranjan A."/>
            <person name="Chitnis C.E."/>
        </authorList>
    </citation>
    <scope>FUNCTION</scope>
</reference>
<reference key="3">
    <citation type="journal article" date="2016" name="Nat. Commun.">
        <title>Ancient human sialic acid variant restricts an emerging zoonotic malaria parasite.</title>
        <authorList>
            <person name="Dankwa S."/>
            <person name="Lim C."/>
            <person name="Bei A.K."/>
            <person name="Jiang R.H."/>
            <person name="Abshire J.R."/>
            <person name="Patel S.D."/>
            <person name="Goldberg J.M."/>
            <person name="Moreno Y."/>
            <person name="Kono M."/>
            <person name="Niles J.C."/>
            <person name="Duraisingh M.T."/>
        </authorList>
    </citation>
    <scope>FUNCTION</scope>
</reference>
<name>PVDG_PLAKN</name>